<reference key="1">
    <citation type="journal article" date="2007" name="Genome Biol.">
        <title>Characterization and modeling of the Haemophilus influenzae core and supragenomes based on the complete genomic sequences of Rd and 12 clinical nontypeable strains.</title>
        <authorList>
            <person name="Hogg J.S."/>
            <person name="Hu F.Z."/>
            <person name="Janto B."/>
            <person name="Boissy R."/>
            <person name="Hayes J."/>
            <person name="Keefe R."/>
            <person name="Post J.C."/>
            <person name="Ehrlich G.D."/>
        </authorList>
    </citation>
    <scope>NUCLEOTIDE SEQUENCE [LARGE SCALE GENOMIC DNA]</scope>
    <source>
        <strain>PittEE</strain>
    </source>
</reference>
<feature type="chain" id="PRO_1000050193" description="4-hydroxy-tetrahydrodipicolinate synthase">
    <location>
        <begin position="1"/>
        <end position="298"/>
    </location>
</feature>
<feature type="active site" description="Proton donor/acceptor" evidence="1">
    <location>
        <position position="139"/>
    </location>
</feature>
<feature type="active site" description="Schiff-base intermediate with substrate" evidence="1">
    <location>
        <position position="167"/>
    </location>
</feature>
<feature type="binding site" evidence="1">
    <location>
        <position position="51"/>
    </location>
    <ligand>
        <name>pyruvate</name>
        <dbReference type="ChEBI" id="CHEBI:15361"/>
    </ligand>
</feature>
<feature type="binding site" evidence="1">
    <location>
        <position position="209"/>
    </location>
    <ligand>
        <name>pyruvate</name>
        <dbReference type="ChEBI" id="CHEBI:15361"/>
    </ligand>
</feature>
<feature type="site" description="Part of a proton relay during catalysis" evidence="1">
    <location>
        <position position="50"/>
    </location>
</feature>
<feature type="site" description="Part of a proton relay during catalysis" evidence="1">
    <location>
        <position position="113"/>
    </location>
</feature>
<name>DAPA_HAEIE</name>
<accession>A5UAN5</accession>
<keyword id="KW-0028">Amino-acid biosynthesis</keyword>
<keyword id="KW-0963">Cytoplasm</keyword>
<keyword id="KW-0220">Diaminopimelate biosynthesis</keyword>
<keyword id="KW-0456">Lyase</keyword>
<keyword id="KW-0457">Lysine biosynthesis</keyword>
<keyword id="KW-0704">Schiff base</keyword>
<protein>
    <recommendedName>
        <fullName evidence="1">4-hydroxy-tetrahydrodipicolinate synthase</fullName>
        <shortName evidence="1">HTPA synthase</shortName>
        <ecNumber evidence="1">4.3.3.7</ecNumber>
    </recommendedName>
</protein>
<sequence>MSAQNPLFSGSIVALVTPMNHYGEVDFSCLEKLVEHHIEAGSNALVSVGTTGESATLSIEENVKVIEKTVEFAKGRIPIIAGAGANATSEAITMTKLLRDSGVAGCLSVVPYYNKPTQEGIYQHFKAIAECTNLPQILYNVPSRTGSDMKPETVARLAKIENIVGIKEATGDVSRIVKIKQLAGKNFIVLSGDDATGLEAIKLGAEGVISVTNNIAAKDMADMYRYALVGDFDKAEEINARLMRLHHDLFIESNPIPVKWAAYRLGLIKSSHLRLPLTTLSEEIQPKVEDALKIAGLL</sequence>
<evidence type="ECO:0000255" key="1">
    <source>
        <dbReference type="HAMAP-Rule" id="MF_00418"/>
    </source>
</evidence>
<evidence type="ECO:0000305" key="2"/>
<gene>
    <name evidence="1" type="primary">dapA</name>
    <name type="ordered locus">CGSHiEE_01790</name>
</gene>
<dbReference type="EC" id="4.3.3.7" evidence="1"/>
<dbReference type="EMBL" id="CP000671">
    <property type="protein sequence ID" value="ABQ97836.1"/>
    <property type="molecule type" value="Genomic_DNA"/>
</dbReference>
<dbReference type="SMR" id="A5UAN5"/>
<dbReference type="KEGG" id="hip:CGSHiEE_01790"/>
<dbReference type="HOGENOM" id="CLU_049343_7_1_6"/>
<dbReference type="UniPathway" id="UPA00034">
    <property type="reaction ID" value="UER00017"/>
</dbReference>
<dbReference type="GO" id="GO:0005829">
    <property type="term" value="C:cytosol"/>
    <property type="evidence" value="ECO:0007669"/>
    <property type="project" value="TreeGrafter"/>
</dbReference>
<dbReference type="GO" id="GO:0008840">
    <property type="term" value="F:4-hydroxy-tetrahydrodipicolinate synthase activity"/>
    <property type="evidence" value="ECO:0007669"/>
    <property type="project" value="UniProtKB-UniRule"/>
</dbReference>
<dbReference type="GO" id="GO:0019877">
    <property type="term" value="P:diaminopimelate biosynthetic process"/>
    <property type="evidence" value="ECO:0007669"/>
    <property type="project" value="UniProtKB-UniRule"/>
</dbReference>
<dbReference type="GO" id="GO:0009089">
    <property type="term" value="P:lysine biosynthetic process via diaminopimelate"/>
    <property type="evidence" value="ECO:0007669"/>
    <property type="project" value="UniProtKB-UniRule"/>
</dbReference>
<dbReference type="CDD" id="cd00950">
    <property type="entry name" value="DHDPS"/>
    <property type="match status" value="1"/>
</dbReference>
<dbReference type="Gene3D" id="3.20.20.70">
    <property type="entry name" value="Aldolase class I"/>
    <property type="match status" value="1"/>
</dbReference>
<dbReference type="HAMAP" id="MF_00418">
    <property type="entry name" value="DapA"/>
    <property type="match status" value="1"/>
</dbReference>
<dbReference type="InterPro" id="IPR013785">
    <property type="entry name" value="Aldolase_TIM"/>
</dbReference>
<dbReference type="InterPro" id="IPR005263">
    <property type="entry name" value="DapA"/>
</dbReference>
<dbReference type="InterPro" id="IPR002220">
    <property type="entry name" value="DapA-like"/>
</dbReference>
<dbReference type="InterPro" id="IPR020625">
    <property type="entry name" value="Schiff_base-form_aldolases_AS"/>
</dbReference>
<dbReference type="InterPro" id="IPR020624">
    <property type="entry name" value="Schiff_base-form_aldolases_CS"/>
</dbReference>
<dbReference type="NCBIfam" id="TIGR00674">
    <property type="entry name" value="dapA"/>
    <property type="match status" value="1"/>
</dbReference>
<dbReference type="PANTHER" id="PTHR12128:SF66">
    <property type="entry name" value="4-HYDROXY-2-OXOGLUTARATE ALDOLASE, MITOCHONDRIAL"/>
    <property type="match status" value="1"/>
</dbReference>
<dbReference type="PANTHER" id="PTHR12128">
    <property type="entry name" value="DIHYDRODIPICOLINATE SYNTHASE"/>
    <property type="match status" value="1"/>
</dbReference>
<dbReference type="Pfam" id="PF00701">
    <property type="entry name" value="DHDPS"/>
    <property type="match status" value="1"/>
</dbReference>
<dbReference type="PIRSF" id="PIRSF001365">
    <property type="entry name" value="DHDPS"/>
    <property type="match status" value="1"/>
</dbReference>
<dbReference type="PRINTS" id="PR00146">
    <property type="entry name" value="DHPICSNTHASE"/>
</dbReference>
<dbReference type="SMART" id="SM01130">
    <property type="entry name" value="DHDPS"/>
    <property type="match status" value="1"/>
</dbReference>
<dbReference type="SUPFAM" id="SSF51569">
    <property type="entry name" value="Aldolase"/>
    <property type="match status" value="1"/>
</dbReference>
<dbReference type="PROSITE" id="PS00665">
    <property type="entry name" value="DHDPS_1"/>
    <property type="match status" value="1"/>
</dbReference>
<dbReference type="PROSITE" id="PS00666">
    <property type="entry name" value="DHDPS_2"/>
    <property type="match status" value="1"/>
</dbReference>
<organism>
    <name type="scientific">Haemophilus influenzae (strain PittEE)</name>
    <dbReference type="NCBI Taxonomy" id="374930"/>
    <lineage>
        <taxon>Bacteria</taxon>
        <taxon>Pseudomonadati</taxon>
        <taxon>Pseudomonadota</taxon>
        <taxon>Gammaproteobacteria</taxon>
        <taxon>Pasteurellales</taxon>
        <taxon>Pasteurellaceae</taxon>
        <taxon>Haemophilus</taxon>
    </lineage>
</organism>
<proteinExistence type="inferred from homology"/>
<comment type="function">
    <text evidence="1">Catalyzes the condensation of (S)-aspartate-beta-semialdehyde [(S)-ASA] and pyruvate to 4-hydroxy-tetrahydrodipicolinate (HTPA).</text>
</comment>
<comment type="catalytic activity">
    <reaction evidence="1">
        <text>L-aspartate 4-semialdehyde + pyruvate = (2S,4S)-4-hydroxy-2,3,4,5-tetrahydrodipicolinate + H2O + H(+)</text>
        <dbReference type="Rhea" id="RHEA:34171"/>
        <dbReference type="ChEBI" id="CHEBI:15361"/>
        <dbReference type="ChEBI" id="CHEBI:15377"/>
        <dbReference type="ChEBI" id="CHEBI:15378"/>
        <dbReference type="ChEBI" id="CHEBI:67139"/>
        <dbReference type="ChEBI" id="CHEBI:537519"/>
        <dbReference type="EC" id="4.3.3.7"/>
    </reaction>
</comment>
<comment type="pathway">
    <text evidence="1">Amino-acid biosynthesis; L-lysine biosynthesis via DAP pathway; (S)-tetrahydrodipicolinate from L-aspartate: step 3/4.</text>
</comment>
<comment type="subunit">
    <text evidence="1">Homotetramer; dimer of dimers.</text>
</comment>
<comment type="subcellular location">
    <subcellularLocation>
        <location evidence="1">Cytoplasm</location>
    </subcellularLocation>
</comment>
<comment type="similarity">
    <text evidence="1">Belongs to the DapA family.</text>
</comment>
<comment type="caution">
    <text evidence="2">Was originally thought to be a dihydrodipicolinate synthase (DHDPS), catalyzing the condensation of (S)-aspartate-beta-semialdehyde [(S)-ASA] and pyruvate to dihydrodipicolinate (DHDP). However, it was shown in E.coli that the product of the enzymatic reaction is not dihydrodipicolinate but in fact (4S)-4-hydroxy-2,3,4,5-tetrahydro-(2S)-dipicolinic acid (HTPA), and that the consecutive dehydration reaction leading to DHDP is not spontaneous but catalyzed by DapB.</text>
</comment>